<sequence length="297" mass="32898">MPPSPCAVLRVRHTKPARAAGVAAHRSFSLCNEAVYRRGQKVFPLVLRRAARFLHECLPARCEVFEHARSEAKKVHRRYFLPGECAGRACRVWRAVFRALXGNDPSAAVRVPADVRVFVYGTHQASCGGDCGGGGRDCGVSVRKGADTARNATGFAERVHKGVADHGVACRVQPLRGKVRGKRFVRVASVVVISVDNRKRCSQLCACAQQRVRRPPRRAPRRMRQSGAVCPCFLCREGLKHVLRIAVLREVVKQARAKVALYIMPNNTQHAGKPGAQHRTRRSPPAFRRADRLRQSA</sequence>
<keyword id="KW-1185">Reference proteome</keyword>
<reference key="1">
    <citation type="journal article" date="1998" name="Science">
        <title>Complete genome sequence of Treponema pallidum, the syphilis spirochete.</title>
        <authorList>
            <person name="Fraser C.M."/>
            <person name="Norris S.J."/>
            <person name="Weinstock G.M."/>
            <person name="White O."/>
            <person name="Sutton G.G."/>
            <person name="Dodson R.J."/>
            <person name="Gwinn M.L."/>
            <person name="Hickey E.K."/>
            <person name="Clayton R.A."/>
            <person name="Ketchum K.A."/>
            <person name="Sodergren E."/>
            <person name="Hardham J.M."/>
            <person name="McLeod M.P."/>
            <person name="Salzberg S.L."/>
            <person name="Peterson J.D."/>
            <person name="Khalak H.G."/>
            <person name="Richardson D.L."/>
            <person name="Howell J.K."/>
            <person name="Chidambaram M."/>
            <person name="Utterback T.R."/>
            <person name="McDonald L.A."/>
            <person name="Artiach P."/>
            <person name="Bowman C."/>
            <person name="Cotton M.D."/>
            <person name="Fujii C."/>
            <person name="Garland S.A."/>
            <person name="Hatch B."/>
            <person name="Horst K."/>
            <person name="Roberts K.M."/>
            <person name="Sandusky M."/>
            <person name="Weidman J.F."/>
            <person name="Smith H.O."/>
            <person name="Venter J.C."/>
        </authorList>
    </citation>
    <scope>NUCLEOTIDE SEQUENCE [LARGE SCALE GENOMIC DNA]</scope>
    <source>
        <strain>Nichols</strain>
    </source>
</reference>
<gene>
    <name type="ordered locus">TP_0922</name>
</gene>
<name>Y922_TREPA</name>
<accession>O83892</accession>
<proteinExistence type="predicted"/>
<feature type="chain" id="PRO_0000202351" description="Uncharacterized protein TP_0922">
    <location>
        <begin position="1"/>
        <end position="297"/>
    </location>
</feature>
<feature type="region of interest" description="Disordered" evidence="1">
    <location>
        <begin position="267"/>
        <end position="297"/>
    </location>
</feature>
<feature type="compositionally biased region" description="Basic and acidic residues" evidence="1">
    <location>
        <begin position="288"/>
        <end position="297"/>
    </location>
</feature>
<evidence type="ECO:0000256" key="1">
    <source>
        <dbReference type="SAM" id="MobiDB-lite"/>
    </source>
</evidence>
<protein>
    <recommendedName>
        <fullName>Uncharacterized protein TP_0922</fullName>
    </recommendedName>
</protein>
<organism>
    <name type="scientific">Treponema pallidum (strain Nichols)</name>
    <dbReference type="NCBI Taxonomy" id="243276"/>
    <lineage>
        <taxon>Bacteria</taxon>
        <taxon>Pseudomonadati</taxon>
        <taxon>Spirochaetota</taxon>
        <taxon>Spirochaetia</taxon>
        <taxon>Spirochaetales</taxon>
        <taxon>Treponemataceae</taxon>
        <taxon>Treponema</taxon>
    </lineage>
</organism>
<dbReference type="EMBL" id="AE000520">
    <property type="protein sequence ID" value="AAC65879.1"/>
    <property type="molecule type" value="Genomic_DNA"/>
</dbReference>
<dbReference type="PIR" id="G71265">
    <property type="entry name" value="G71265"/>
</dbReference>
<dbReference type="RefSeq" id="WP_010882365.1">
    <property type="nucleotide sequence ID" value="NC_000919.1"/>
</dbReference>
<dbReference type="EnsemblBacteria" id="AAC65879">
    <property type="protein sequence ID" value="AAC65879"/>
    <property type="gene ID" value="TP_0922"/>
</dbReference>
<dbReference type="KEGG" id="tpa:TP_0922"/>
<dbReference type="HOGENOM" id="CLU_936707_0_0_12"/>
<dbReference type="Proteomes" id="UP000000811">
    <property type="component" value="Chromosome"/>
</dbReference>